<keyword id="KW-0067">ATP-binding</keyword>
<keyword id="KW-1017">Isopeptide bond</keyword>
<keyword id="KW-0418">Kinase</keyword>
<keyword id="KW-0507">mRNA processing</keyword>
<keyword id="KW-0508">mRNA splicing</keyword>
<keyword id="KW-0547">Nucleotide-binding</keyword>
<keyword id="KW-0539">Nucleus</keyword>
<keyword id="KW-0597">Phosphoprotein</keyword>
<keyword id="KW-1185">Reference proteome</keyword>
<keyword id="KW-0723">Serine/threonine-protein kinase</keyword>
<keyword id="KW-0808">Transferase</keyword>
<keyword id="KW-0832">Ubl conjugation</keyword>
<organism>
    <name type="scientific">Bos taurus</name>
    <name type="common">Bovine</name>
    <dbReference type="NCBI Taxonomy" id="9913"/>
    <lineage>
        <taxon>Eukaryota</taxon>
        <taxon>Metazoa</taxon>
        <taxon>Chordata</taxon>
        <taxon>Craniata</taxon>
        <taxon>Vertebrata</taxon>
        <taxon>Euteleostomi</taxon>
        <taxon>Mammalia</taxon>
        <taxon>Eutheria</taxon>
        <taxon>Laurasiatheria</taxon>
        <taxon>Artiodactyla</taxon>
        <taxon>Ruminantia</taxon>
        <taxon>Pecora</taxon>
        <taxon>Bovidae</taxon>
        <taxon>Bovinae</taxon>
        <taxon>Bos</taxon>
    </lineage>
</organism>
<accession>E1BB50</accession>
<name>CDK12_BOVIN</name>
<evidence type="ECO:0000250" key="1"/>
<evidence type="ECO:0000250" key="2">
    <source>
        <dbReference type="UniProtKB" id="Q14AX6"/>
    </source>
</evidence>
<evidence type="ECO:0000250" key="3">
    <source>
        <dbReference type="UniProtKB" id="Q3MJK5"/>
    </source>
</evidence>
<evidence type="ECO:0000250" key="4">
    <source>
        <dbReference type="UniProtKB" id="Q9NYV4"/>
    </source>
</evidence>
<evidence type="ECO:0000255" key="5">
    <source>
        <dbReference type="PROSITE-ProRule" id="PRU00159"/>
    </source>
</evidence>
<evidence type="ECO:0000255" key="6">
    <source>
        <dbReference type="PROSITE-ProRule" id="PRU10027"/>
    </source>
</evidence>
<evidence type="ECO:0000256" key="7">
    <source>
        <dbReference type="SAM" id="MobiDB-lite"/>
    </source>
</evidence>
<evidence type="ECO:0000305" key="8"/>
<sequence length="1264" mass="140642">MPNPERHGGKKDGSGGASGTLQPSSGGGSSNSRERHRLGSKHKRHKSKHSKDMGLVTPEAAPLGTVIKPLVEYDDISSDSDTFSDDLAFKVDRRENDERRGTDRSDRLHKHRHHQHRRTRDLLKTKQTEKEKNLEASSKSGSTKDRISGSSKRSNEENDDHGKAQISKSSNKESRSSKLHKEKTRKERELKSGHKDRSKSHRKRETPKSYKTVDSPKRRSRSPHRKWSDSPKQDDSPSGASYGQDYDLSPPRSHTSSNYDSYKKSPGSTSRRQSISPPYKEPSAYQSSTRSPSPYSRRQRSVSPYSRRRSSSYERSGSYSGRSPSPYGRRRSSSPFLSKRSLSRSPLPSRKSMKSRSRSPAYSRHSSSHSKKKRSGSRSRHSSISPVRLPLNSSLGAELSRKKKERAAAAAAAKMDGKESKGSPIFLPKKENSSVEAKDSGLEPKKLPRGVKLEKSAPDTELVNVTHLNTEVKNSLDTGKVKLDENSEKHPVLKDTKVQGTKDSKPVALKEEIVTPKETETSEKETLPPLPTVTSPPPLPTTTPPPQTPPLPPLPPLPAIPQQPPLPPPQPTFSQVLSSSTSTLPPSVHPRTSTLSSQANSQPSVQVSVKTQVSVTAAIPHLKTSTLPPLPLPPLLLGDDDMDSPKETLPSKPVKKEKEQRPRHLLTDLPLPPELPGGDPSPPDSPEPKAITPPQQPYKKRPKICCPRYGERRQTESDWGKRCVDKFDIIGIIGEGTYGQVYKAKDKDTGELVALKKVRLDNEKEGFPITAIREIKILRQLIHRSVVNMKEIVTDKQDALDFKKDKGAFYLVFEYMDHDLMGLLESGLVHFSEDHIKSFMKQLMEGLDYCHKKNFLHRDIKCSNILLNNSGQIKLADFGLARLYNSEESRPYTNKVITLWYRPPELLLGEERYTPAIDVWSCGCILGELFTKKPIFQANLELAQLELISRLCGSPCPAVWPDVIKLPYFNTMKPKKQYRRRLREEFSFFFLPWGALDLLDHMLTLDPSKRCTAEQTLQSDFLKDVELSKMDPPDLPHWQDCHELWSKKRRRQRQSGVLVEEPPPPKASRKETISGTSAEPVKNSSPAPPQPAPGKVEPGAGDAIGLGDITQQLNQSELAVLLNLLQSQTDLSIPQMAQLLNIHSNPEMQQQLEALNQSISALTAATSQQQDSEPTAPEESLKEIAPAPAVQPSAEQTTPEASSTPADMQNMLAVLLSQLMKTQEPAGNLEENNSDKNSGPQGPRRTPTMPQEEAAGKQTGHESH</sequence>
<dbReference type="EC" id="2.7.11.22"/>
<dbReference type="EC" id="2.7.11.23"/>
<dbReference type="EMBL" id="AAFC03033685">
    <property type="status" value="NOT_ANNOTATED_CDS"/>
    <property type="molecule type" value="Genomic_DNA"/>
</dbReference>
<dbReference type="EMBL" id="AAFC03036812">
    <property type="status" value="NOT_ANNOTATED_CDS"/>
    <property type="molecule type" value="Genomic_DNA"/>
</dbReference>
<dbReference type="EMBL" id="AAFC03053477">
    <property type="status" value="NOT_ANNOTATED_CDS"/>
    <property type="molecule type" value="Genomic_DNA"/>
</dbReference>
<dbReference type="EMBL" id="AAFC03053478">
    <property type="status" value="NOT_ANNOTATED_CDS"/>
    <property type="molecule type" value="Genomic_DNA"/>
</dbReference>
<dbReference type="SMR" id="E1BB50"/>
<dbReference type="FunCoup" id="E1BB50">
    <property type="interactions" value="101"/>
</dbReference>
<dbReference type="STRING" id="9913.ENSBTAP00000002005"/>
<dbReference type="PaxDb" id="9913-ENSBTAP00000002005"/>
<dbReference type="eggNOG" id="KOG0600">
    <property type="taxonomic scope" value="Eukaryota"/>
</dbReference>
<dbReference type="InParanoid" id="E1BB50"/>
<dbReference type="OrthoDB" id="28397at2759"/>
<dbReference type="Proteomes" id="UP000009136">
    <property type="component" value="Unplaced"/>
</dbReference>
<dbReference type="GO" id="GO:0008024">
    <property type="term" value="C:cyclin/CDK positive transcription elongation factor complex"/>
    <property type="evidence" value="ECO:0000318"/>
    <property type="project" value="GO_Central"/>
</dbReference>
<dbReference type="GO" id="GO:0019908">
    <property type="term" value="C:nuclear cyclin-dependent protein kinase holoenzyme complex"/>
    <property type="evidence" value="ECO:0000250"/>
    <property type="project" value="UniProtKB"/>
</dbReference>
<dbReference type="GO" id="GO:0016607">
    <property type="term" value="C:nuclear speck"/>
    <property type="evidence" value="ECO:0000250"/>
    <property type="project" value="UniProtKB"/>
</dbReference>
<dbReference type="GO" id="GO:0005634">
    <property type="term" value="C:nucleus"/>
    <property type="evidence" value="ECO:0000318"/>
    <property type="project" value="GO_Central"/>
</dbReference>
<dbReference type="GO" id="GO:0005524">
    <property type="term" value="F:ATP binding"/>
    <property type="evidence" value="ECO:0007669"/>
    <property type="project" value="UniProtKB-KW"/>
</dbReference>
<dbReference type="GO" id="GO:0030332">
    <property type="term" value="F:cyclin binding"/>
    <property type="evidence" value="ECO:0000318"/>
    <property type="project" value="GO_Central"/>
</dbReference>
<dbReference type="GO" id="GO:0004693">
    <property type="term" value="F:cyclin-dependent protein serine/threonine kinase activity"/>
    <property type="evidence" value="ECO:0007669"/>
    <property type="project" value="UniProtKB-EC"/>
</dbReference>
<dbReference type="GO" id="GO:0106310">
    <property type="term" value="F:protein serine kinase activity"/>
    <property type="evidence" value="ECO:0007669"/>
    <property type="project" value="RHEA"/>
</dbReference>
<dbReference type="GO" id="GO:0008353">
    <property type="term" value="F:RNA polymerase II CTD heptapeptide repeat kinase activity"/>
    <property type="evidence" value="ECO:0000250"/>
    <property type="project" value="UniProtKB"/>
</dbReference>
<dbReference type="GO" id="GO:0006397">
    <property type="term" value="P:mRNA processing"/>
    <property type="evidence" value="ECO:0007669"/>
    <property type="project" value="UniProtKB-KW"/>
</dbReference>
<dbReference type="GO" id="GO:0045944">
    <property type="term" value="P:positive regulation of transcription by RNA polymerase II"/>
    <property type="evidence" value="ECO:0000250"/>
    <property type="project" value="UniProtKB"/>
</dbReference>
<dbReference type="GO" id="GO:0032968">
    <property type="term" value="P:positive regulation of transcription elongation by RNA polymerase II"/>
    <property type="evidence" value="ECO:0000318"/>
    <property type="project" value="GO_Central"/>
</dbReference>
<dbReference type="GO" id="GO:0043405">
    <property type="term" value="P:regulation of MAP kinase activity"/>
    <property type="evidence" value="ECO:0000250"/>
    <property type="project" value="UniProtKB"/>
</dbReference>
<dbReference type="GO" id="GO:0008380">
    <property type="term" value="P:RNA splicing"/>
    <property type="evidence" value="ECO:0000250"/>
    <property type="project" value="UniProtKB"/>
</dbReference>
<dbReference type="CDD" id="cd07864">
    <property type="entry name" value="STKc_CDK12"/>
    <property type="match status" value="1"/>
</dbReference>
<dbReference type="FunFam" id="1.10.510.10:FF:000102">
    <property type="entry name" value="cyclin-dependent kinase 12 isoform X1"/>
    <property type="match status" value="1"/>
</dbReference>
<dbReference type="FunFam" id="3.30.200.20:FF:000074">
    <property type="entry name" value="cyclin-dependent kinase 12 isoform X2"/>
    <property type="match status" value="1"/>
</dbReference>
<dbReference type="Gene3D" id="3.30.200.20">
    <property type="entry name" value="Phosphorylase Kinase, domain 1"/>
    <property type="match status" value="1"/>
</dbReference>
<dbReference type="Gene3D" id="1.10.510.10">
    <property type="entry name" value="Transferase(Phosphotransferase) domain 1"/>
    <property type="match status" value="1"/>
</dbReference>
<dbReference type="InterPro" id="IPR050108">
    <property type="entry name" value="CDK"/>
</dbReference>
<dbReference type="InterPro" id="IPR011009">
    <property type="entry name" value="Kinase-like_dom_sf"/>
</dbReference>
<dbReference type="InterPro" id="IPR000719">
    <property type="entry name" value="Prot_kinase_dom"/>
</dbReference>
<dbReference type="InterPro" id="IPR017441">
    <property type="entry name" value="Protein_kinase_ATP_BS"/>
</dbReference>
<dbReference type="InterPro" id="IPR008271">
    <property type="entry name" value="Ser/Thr_kinase_AS"/>
</dbReference>
<dbReference type="PANTHER" id="PTHR24056">
    <property type="entry name" value="CELL DIVISION PROTEIN KINASE"/>
    <property type="match status" value="1"/>
</dbReference>
<dbReference type="PANTHER" id="PTHR24056:SF126">
    <property type="entry name" value="CYCLIN-DEPENDENT KINASE 12"/>
    <property type="match status" value="1"/>
</dbReference>
<dbReference type="Pfam" id="PF00069">
    <property type="entry name" value="Pkinase"/>
    <property type="match status" value="1"/>
</dbReference>
<dbReference type="SMART" id="SM00220">
    <property type="entry name" value="S_TKc"/>
    <property type="match status" value="1"/>
</dbReference>
<dbReference type="SUPFAM" id="SSF56112">
    <property type="entry name" value="Protein kinase-like (PK-like)"/>
    <property type="match status" value="1"/>
</dbReference>
<dbReference type="PROSITE" id="PS00107">
    <property type="entry name" value="PROTEIN_KINASE_ATP"/>
    <property type="match status" value="1"/>
</dbReference>
<dbReference type="PROSITE" id="PS50011">
    <property type="entry name" value="PROTEIN_KINASE_DOM"/>
    <property type="match status" value="1"/>
</dbReference>
<dbReference type="PROSITE" id="PS00108">
    <property type="entry name" value="PROTEIN_KINASE_ST"/>
    <property type="match status" value="1"/>
</dbReference>
<comment type="function">
    <text evidence="1">Cyclin-dependent kinase that phosphorylates the C-terminal domain (CTD) of the large subunit of RNA polymerase II (POLR2A), thereby acting as a key regulator of transcription elongation. Regulates the expression of genes involved in DNA repair and is required for the maintenance of genomic stability. Preferentially phosphorylates 'Ser-5' in CTD repeats that are already phosphorylated at 'Ser-7', but can also phosphorylate 'Ser-2'. Required for RNA splicing, possibly by phosphorylating SRSF1/SF2. Involved in regulation of MAP kinase activity, possibly leading to affect the response to estrogen inhibitors (By similarity).</text>
</comment>
<comment type="catalytic activity">
    <reaction>
        <text>[DNA-directed RNA polymerase] + ATP = phospho-[DNA-directed RNA polymerase] + ADP + H(+)</text>
        <dbReference type="Rhea" id="RHEA:10216"/>
        <dbReference type="Rhea" id="RHEA-COMP:11321"/>
        <dbReference type="Rhea" id="RHEA-COMP:11322"/>
        <dbReference type="ChEBI" id="CHEBI:15378"/>
        <dbReference type="ChEBI" id="CHEBI:30616"/>
        <dbReference type="ChEBI" id="CHEBI:43176"/>
        <dbReference type="ChEBI" id="CHEBI:68546"/>
        <dbReference type="ChEBI" id="CHEBI:456216"/>
        <dbReference type="EC" id="2.7.11.23"/>
    </reaction>
</comment>
<comment type="catalytic activity">
    <reaction>
        <text>L-seryl-[protein] + ATP = O-phospho-L-seryl-[protein] + ADP + H(+)</text>
        <dbReference type="Rhea" id="RHEA:17989"/>
        <dbReference type="Rhea" id="RHEA-COMP:9863"/>
        <dbReference type="Rhea" id="RHEA-COMP:11604"/>
        <dbReference type="ChEBI" id="CHEBI:15378"/>
        <dbReference type="ChEBI" id="CHEBI:29999"/>
        <dbReference type="ChEBI" id="CHEBI:30616"/>
        <dbReference type="ChEBI" id="CHEBI:83421"/>
        <dbReference type="ChEBI" id="CHEBI:456216"/>
        <dbReference type="EC" id="2.7.11.22"/>
    </reaction>
</comment>
<comment type="catalytic activity">
    <reaction>
        <text>L-threonyl-[protein] + ATP = O-phospho-L-threonyl-[protein] + ADP + H(+)</text>
        <dbReference type="Rhea" id="RHEA:46608"/>
        <dbReference type="Rhea" id="RHEA-COMP:11060"/>
        <dbReference type="Rhea" id="RHEA-COMP:11605"/>
        <dbReference type="ChEBI" id="CHEBI:15378"/>
        <dbReference type="ChEBI" id="CHEBI:30013"/>
        <dbReference type="ChEBI" id="CHEBI:30616"/>
        <dbReference type="ChEBI" id="CHEBI:61977"/>
        <dbReference type="ChEBI" id="CHEBI:456216"/>
        <dbReference type="EC" id="2.7.11.22"/>
    </reaction>
</comment>
<comment type="subunit">
    <text evidence="1">Interacts with CCNL1 and CCNL2.</text>
</comment>
<comment type="subcellular location">
    <subcellularLocation>
        <location evidence="1">Nucleus</location>
    </subcellularLocation>
    <subcellularLocation>
        <location evidence="1">Nucleus speckle</location>
    </subcellularLocation>
    <text evidence="1">Colocalized with nuclear speckles throughout interphase.</text>
</comment>
<comment type="PTM">
    <text evidence="1">Phosphorylation at Thr-893 increases kinase activity.</text>
</comment>
<comment type="similarity">
    <text evidence="8">Belongs to the protein kinase superfamily. CMGC Ser/Thr protein kinase family. CDC2/CDKX subfamily.</text>
</comment>
<protein>
    <recommendedName>
        <fullName>Cyclin-dependent kinase 12</fullName>
        <ecNumber>2.7.11.22</ecNumber>
        <ecNumber>2.7.11.23</ecNumber>
    </recommendedName>
    <alternativeName>
        <fullName>Cell division protein kinase 12</fullName>
    </alternativeName>
</protein>
<reference key="1">
    <citation type="journal article" date="2009" name="Science">
        <title>The genome sequence of taurine cattle: a window to ruminant biology and evolution.</title>
        <authorList>
            <consortium name="The bovine genome sequencing and analysis consortium"/>
        </authorList>
    </citation>
    <scope>NUCLEOTIDE SEQUENCE [LARGE SCALE GENOMIC DNA]</scope>
</reference>
<proteinExistence type="inferred from homology"/>
<feature type="chain" id="PRO_0000406958" description="Cyclin-dependent kinase 12">
    <location>
        <begin position="1"/>
        <end position="1264"/>
    </location>
</feature>
<feature type="domain" description="Protein kinase" evidence="5">
    <location>
        <begin position="727"/>
        <end position="1022"/>
    </location>
</feature>
<feature type="region of interest" description="Disordered" evidence="7">
    <location>
        <begin position="1"/>
        <end position="455"/>
    </location>
</feature>
<feature type="region of interest" description="Disordered" evidence="7">
    <location>
        <begin position="471"/>
        <end position="611"/>
    </location>
</feature>
<feature type="region of interest" description="Disordered" evidence="7">
    <location>
        <begin position="623"/>
        <end position="703"/>
    </location>
</feature>
<feature type="region of interest" description="Disordered" evidence="7">
    <location>
        <begin position="1052"/>
        <end position="1103"/>
    </location>
</feature>
<feature type="region of interest" description="Disordered" evidence="7">
    <location>
        <begin position="1163"/>
        <end position="1264"/>
    </location>
</feature>
<feature type="compositionally biased region" description="Basic and acidic residues" evidence="7">
    <location>
        <begin position="1"/>
        <end position="13"/>
    </location>
</feature>
<feature type="compositionally biased region" description="Basic residues" evidence="7">
    <location>
        <begin position="34"/>
        <end position="49"/>
    </location>
</feature>
<feature type="compositionally biased region" description="Acidic residues" evidence="7">
    <location>
        <begin position="72"/>
        <end position="84"/>
    </location>
</feature>
<feature type="compositionally biased region" description="Basic and acidic residues" evidence="7">
    <location>
        <begin position="87"/>
        <end position="106"/>
    </location>
</feature>
<feature type="compositionally biased region" description="Basic residues" evidence="7">
    <location>
        <begin position="107"/>
        <end position="119"/>
    </location>
</feature>
<feature type="compositionally biased region" description="Basic and acidic residues" evidence="7">
    <location>
        <begin position="120"/>
        <end position="134"/>
    </location>
</feature>
<feature type="compositionally biased region" description="Basic and acidic residues" evidence="7">
    <location>
        <begin position="142"/>
        <end position="163"/>
    </location>
</feature>
<feature type="compositionally biased region" description="Basic and acidic residues" evidence="7">
    <location>
        <begin position="184"/>
        <end position="195"/>
    </location>
</feature>
<feature type="compositionally biased region" description="Basic residues" evidence="7">
    <location>
        <begin position="196"/>
        <end position="205"/>
    </location>
</feature>
<feature type="compositionally biased region" description="Basic and acidic residues" evidence="7">
    <location>
        <begin position="226"/>
        <end position="235"/>
    </location>
</feature>
<feature type="compositionally biased region" description="Polar residues" evidence="7">
    <location>
        <begin position="252"/>
        <end position="276"/>
    </location>
</feature>
<feature type="compositionally biased region" description="Low complexity" evidence="7">
    <location>
        <begin position="287"/>
        <end position="305"/>
    </location>
</feature>
<feature type="compositionally biased region" description="Low complexity" evidence="7">
    <location>
        <begin position="313"/>
        <end position="350"/>
    </location>
</feature>
<feature type="compositionally biased region" description="Basic residues" evidence="7">
    <location>
        <begin position="366"/>
        <end position="381"/>
    </location>
</feature>
<feature type="compositionally biased region" description="Basic and acidic residues" evidence="7">
    <location>
        <begin position="428"/>
        <end position="455"/>
    </location>
</feature>
<feature type="compositionally biased region" description="Basic and acidic residues" evidence="7">
    <location>
        <begin position="479"/>
        <end position="526"/>
    </location>
</feature>
<feature type="compositionally biased region" description="Pro residues" evidence="7">
    <location>
        <begin position="528"/>
        <end position="571"/>
    </location>
</feature>
<feature type="compositionally biased region" description="Low complexity" evidence="7">
    <location>
        <begin position="576"/>
        <end position="586"/>
    </location>
</feature>
<feature type="compositionally biased region" description="Polar residues" evidence="7">
    <location>
        <begin position="590"/>
        <end position="600"/>
    </location>
</feature>
<feature type="compositionally biased region" description="Low complexity" evidence="7">
    <location>
        <begin position="601"/>
        <end position="611"/>
    </location>
</feature>
<feature type="compositionally biased region" description="Basic and acidic residues" evidence="7">
    <location>
        <begin position="654"/>
        <end position="666"/>
    </location>
</feature>
<feature type="compositionally biased region" description="Pro residues" evidence="7">
    <location>
        <begin position="670"/>
        <end position="685"/>
    </location>
</feature>
<feature type="compositionally biased region" description="Polar residues" evidence="7">
    <location>
        <begin position="1073"/>
        <end position="1085"/>
    </location>
</feature>
<feature type="compositionally biased region" description="Polar residues" evidence="7">
    <location>
        <begin position="1163"/>
        <end position="1173"/>
    </location>
</feature>
<feature type="compositionally biased region" description="Polar residues" evidence="7">
    <location>
        <begin position="1193"/>
        <end position="1207"/>
    </location>
</feature>
<feature type="active site" description="Proton acceptor" evidence="5 6">
    <location>
        <position position="859"/>
    </location>
</feature>
<feature type="binding site" evidence="5">
    <location>
        <begin position="733"/>
        <end position="741"/>
    </location>
    <ligand>
        <name>ATP</name>
        <dbReference type="ChEBI" id="CHEBI:30616"/>
    </ligand>
</feature>
<feature type="binding site" evidence="5">
    <location>
        <position position="756"/>
    </location>
    <ligand>
        <name>ATP</name>
        <dbReference type="ChEBI" id="CHEBI:30616"/>
    </ligand>
</feature>
<feature type="binding site" evidence="5">
    <location>
        <begin position="814"/>
        <end position="819"/>
    </location>
    <ligand>
        <name>ATP</name>
        <dbReference type="ChEBI" id="CHEBI:30616"/>
    </ligand>
</feature>
<feature type="binding site" evidence="5">
    <location>
        <position position="1042"/>
    </location>
    <ligand>
        <name>ATP</name>
        <dbReference type="ChEBI" id="CHEBI:30616"/>
    </ligand>
</feature>
<feature type="modified residue" description="Phosphothreonine" evidence="4">
    <location>
        <position position="57"/>
    </location>
</feature>
<feature type="modified residue" description="Phosphotyrosine" evidence="4">
    <location>
        <position position="73"/>
    </location>
</feature>
<feature type="modified residue" description="Phosphoserine" evidence="4">
    <location>
        <position position="236"/>
    </location>
</feature>
<feature type="modified residue" description="Phosphoserine" evidence="4">
    <location>
        <position position="249"/>
    </location>
</feature>
<feature type="modified residue" description="Phosphoserine" evidence="4">
    <location>
        <position position="265"/>
    </location>
</feature>
<feature type="modified residue" description="Phosphoserine" evidence="4">
    <location>
        <position position="274"/>
    </location>
</feature>
<feature type="modified residue" description="Phosphoserine" evidence="4">
    <location>
        <position position="276"/>
    </location>
</feature>
<feature type="modified residue" description="Phosphoserine" evidence="4">
    <location>
        <position position="301"/>
    </location>
</feature>
<feature type="modified residue" description="Phosphoserine" evidence="4">
    <location>
        <position position="303"/>
    </location>
</feature>
<feature type="modified residue" description="Phosphoserine" evidence="4">
    <location>
        <position position="310"/>
    </location>
</feature>
<feature type="modified residue" description="Phosphoserine" evidence="4">
    <location>
        <position position="312"/>
    </location>
</feature>
<feature type="modified residue" description="Phosphoserine" evidence="4">
    <location>
        <position position="318"/>
    </location>
</feature>
<feature type="modified residue" description="Phosphoserine" evidence="4">
    <location>
        <position position="323"/>
    </location>
</feature>
<feature type="modified residue" description="Phosphoserine" evidence="4">
    <location>
        <position position="325"/>
    </location>
</feature>
<feature type="modified residue" description="Phosphoserine" evidence="4">
    <location>
        <position position="332"/>
    </location>
</feature>
<feature type="modified residue" description="Phosphoserine" evidence="4">
    <location>
        <position position="333"/>
    </location>
</feature>
<feature type="modified residue" description="Phosphoserine" evidence="4">
    <location>
        <position position="334"/>
    </location>
</feature>
<feature type="modified residue" description="Phosphoserine" evidence="4">
    <location>
        <position position="338"/>
    </location>
</feature>
<feature type="modified residue" description="Phosphoserine" evidence="4">
    <location>
        <position position="341"/>
    </location>
</feature>
<feature type="modified residue" description="Phosphoserine" evidence="4">
    <location>
        <position position="343"/>
    </location>
</feature>
<feature type="modified residue" description="Phosphoserine" evidence="4">
    <location>
        <position position="345"/>
    </location>
</feature>
<feature type="modified residue" description="Phosphoserine" evidence="4">
    <location>
        <position position="383"/>
    </location>
</feature>
<feature type="modified residue" description="Phosphoserine" evidence="4">
    <location>
        <position position="385"/>
    </location>
</feature>
<feature type="modified residue" description="Phosphoserine" evidence="4">
    <location>
        <position position="400"/>
    </location>
</feature>
<feature type="modified residue" description="Phosphoserine" evidence="4">
    <location>
        <position position="420"/>
    </location>
</feature>
<feature type="modified residue" description="Phosphoserine" evidence="4">
    <location>
        <position position="423"/>
    </location>
</feature>
<feature type="modified residue" description="Phosphothreonine" evidence="4">
    <location>
        <position position="515"/>
    </location>
</feature>
<feature type="modified residue" description="Phosphoserine" evidence="4">
    <location>
        <position position="614"/>
    </location>
</feature>
<feature type="modified residue" description="Phosphoserine" evidence="3">
    <location>
        <position position="644"/>
    </location>
</feature>
<feature type="modified residue" description="Phosphoserine" evidence="4">
    <location>
        <position position="681"/>
    </location>
</feature>
<feature type="modified residue" description="Phosphoserine" evidence="4">
    <location>
        <position position="685"/>
    </location>
</feature>
<feature type="modified residue" description="Phosphothreonine" evidence="4">
    <location>
        <position position="692"/>
    </location>
</feature>
<feature type="modified residue" description="Phosphoserine" evidence="4">
    <location>
        <position position="889"/>
    </location>
</feature>
<feature type="modified residue" description="Phosphothreonine" evidence="4">
    <location>
        <position position="893"/>
    </location>
</feature>
<feature type="modified residue" description="Phosphoserine" evidence="4">
    <location>
        <position position="1055"/>
    </location>
</feature>
<feature type="modified residue" description="Phosphoserine" evidence="4">
    <location>
        <position position="1085"/>
    </location>
</feature>
<feature type="modified residue" description="Phosphothreonine" evidence="4">
    <location>
        <position position="1246"/>
    </location>
</feature>
<feature type="modified residue" description="Phosphothreonine" evidence="2">
    <location>
        <position position="1248"/>
    </location>
</feature>
<feature type="cross-link" description="Glycyl lysine isopeptide (Lys-Gly) (interchain with G-Cter in SUMO2)" evidence="4">
    <location>
        <position position="263"/>
    </location>
</feature>
<feature type="cross-link" description="Glycyl lysine isopeptide (Lys-Gly) (interchain with G-Cter in SUMO2)" evidence="4">
    <location>
        <position position="510"/>
    </location>
</feature>
<feature type="cross-link" description="Glycyl lysine isopeptide (Lys-Gly) (interchain with G-Cter in SUMO2)" evidence="4">
    <location>
        <position position="655"/>
    </location>
</feature>
<gene>
    <name type="primary">CDK12</name>
</gene>